<geneLocation type="chloroplast"/>
<sequence length="750" mass="83203">MIIRSPEPEVKILVDRDPIKTSFEEWAKPGHFSRTIAKGPDTTTWIWNLHADAHDFDSHTSDLEEISRKVFSAHFGQLSIIFLWLSGMYFHGARFSNYEAWLSDPTHIGPSAQVVWPIVGQEILNGDVGGGFRGIQITSGFFQIWRASGITSELQLYCTAIGALVFAALMLFAGWFHYHKAAPKLAWFQDVESMLNHHLAGLLGLGSLSWAGHQVHVSLPINQFLNAGVDPKEIPLPHEFILNRDLLAQLYPSFAEGATPFFTLNWSKYSEFLTFRGGLDPVTGGLWLTDIAHHHLAIAILFLIAGHMYRTNWGIGHGLKDILEAHKGPFTGQGHKGLYEILTTSWHAQLSLNLAMLGSLTIVVAHHMYSMPPYPYLATDYATQLSLFTHHMWIGGFLIVGAAAHAAIFMVRDYDPTNRYNDLLDRVLRHRDAIISHLNWVCIFLGFHSFGLYIHNDTMSALGRPQDMFSDTAIQLQPVFAQWIQNTHALAPGVTAPGETASTSLTWGGGELVAVGGKVALLPIPLGTADFLVHHIHAFTIHVTVLILLKGVLFARSSRLIPDKANLGFRFPCDGPGRGGTCQVSAWDHVFLGLFWMYNAISVVIFHFSWKMQSDVWGSISDQGVVTHITGGNFAQSSITINGWLRDFLWAQASQVIQSYGSSLSAYGLFFLGAHFVWAFSLMFLFSGRGYWQELIESIVWAHNKLKVAPATQPRALSIVQGRAVGVTHYLLGGIATTWAFFLARIIAVG</sequence>
<comment type="function">
    <text>PsaA and PsaB bind P700, the primary electron donor of photosystem I (PSI), as well as the electron acceptors A0, A1 and FX. PSI is a plastocyanin-ferredoxin oxidoreductase, converting photonic excitation into a charge separation, which transfers an electron from the donor P700 chlorophyll pair to the spectroscopically characterized acceptors A0, A1, FX, FA and FB in turn. Oxidized P700 is reduced on the lumenal side of the thylakoid membrane by plastocyanin.</text>
</comment>
<comment type="catalytic activity">
    <reaction evidence="1">
        <text>reduced [plastocyanin] + hnu + oxidized [2Fe-2S]-[ferredoxin] = oxidized [plastocyanin] + reduced [2Fe-2S]-[ferredoxin]</text>
        <dbReference type="Rhea" id="RHEA:30407"/>
        <dbReference type="Rhea" id="RHEA-COMP:10000"/>
        <dbReference type="Rhea" id="RHEA-COMP:10001"/>
        <dbReference type="Rhea" id="RHEA-COMP:10039"/>
        <dbReference type="Rhea" id="RHEA-COMP:10040"/>
        <dbReference type="ChEBI" id="CHEBI:29036"/>
        <dbReference type="ChEBI" id="CHEBI:30212"/>
        <dbReference type="ChEBI" id="CHEBI:33737"/>
        <dbReference type="ChEBI" id="CHEBI:33738"/>
        <dbReference type="ChEBI" id="CHEBI:49552"/>
        <dbReference type="EC" id="1.97.1.12"/>
    </reaction>
</comment>
<comment type="cofactor">
    <text evidence="1">P700 is a chlorophyll a/chlorophyll a' dimer, A0 is one or more chlorophyll a, A1 is one or both phylloquinones and FX is a shared 4Fe-4S iron-sulfur center.</text>
</comment>
<comment type="subunit">
    <text evidence="1">The PsaA/B heterodimer binds the P700 chlorophyll special pair and subsequent electron acceptors. PSI consists of a core antenna complex that captures photons, and an electron transfer chain that converts photonic excitation into a charge separation. The eukaryotic PSI reaction center is composed of at least 11 subunits.</text>
</comment>
<comment type="subcellular location">
    <subcellularLocation>
        <location evidence="1">Plastid</location>
        <location evidence="1">Chloroplast thylakoid membrane</location>
        <topology evidence="1">Multi-pass membrane protein</topology>
    </subcellularLocation>
</comment>
<comment type="similarity">
    <text evidence="1">Belongs to the PsaA/PsaB family.</text>
</comment>
<dbReference type="EC" id="1.97.1.12" evidence="1"/>
<dbReference type="EMBL" id="AP009366">
    <property type="protein sequence ID" value="BAF49770.1"/>
    <property type="molecule type" value="Genomic_DNA"/>
</dbReference>
<dbReference type="RefSeq" id="YP_001122946.1">
    <property type="nucleotide sequence ID" value="NC_009265.1"/>
</dbReference>
<dbReference type="SMR" id="A4QJB5"/>
<dbReference type="GeneID" id="4968657"/>
<dbReference type="GO" id="GO:0009535">
    <property type="term" value="C:chloroplast thylakoid membrane"/>
    <property type="evidence" value="ECO:0007669"/>
    <property type="project" value="UniProtKB-SubCell"/>
</dbReference>
<dbReference type="GO" id="GO:0009522">
    <property type="term" value="C:photosystem I"/>
    <property type="evidence" value="ECO:0007669"/>
    <property type="project" value="UniProtKB-KW"/>
</dbReference>
<dbReference type="GO" id="GO:0051539">
    <property type="term" value="F:4 iron, 4 sulfur cluster binding"/>
    <property type="evidence" value="ECO:0007669"/>
    <property type="project" value="UniProtKB-KW"/>
</dbReference>
<dbReference type="GO" id="GO:0016168">
    <property type="term" value="F:chlorophyll binding"/>
    <property type="evidence" value="ECO:0007669"/>
    <property type="project" value="UniProtKB-KW"/>
</dbReference>
<dbReference type="GO" id="GO:0009055">
    <property type="term" value="F:electron transfer activity"/>
    <property type="evidence" value="ECO:0007669"/>
    <property type="project" value="UniProtKB-UniRule"/>
</dbReference>
<dbReference type="GO" id="GO:0000287">
    <property type="term" value="F:magnesium ion binding"/>
    <property type="evidence" value="ECO:0007669"/>
    <property type="project" value="UniProtKB-UniRule"/>
</dbReference>
<dbReference type="GO" id="GO:0016491">
    <property type="term" value="F:oxidoreductase activity"/>
    <property type="evidence" value="ECO:0007669"/>
    <property type="project" value="UniProtKB-KW"/>
</dbReference>
<dbReference type="GO" id="GO:0015979">
    <property type="term" value="P:photosynthesis"/>
    <property type="evidence" value="ECO:0007669"/>
    <property type="project" value="UniProtKB-UniRule"/>
</dbReference>
<dbReference type="FunFam" id="1.20.1130.10:FF:000001">
    <property type="entry name" value="Photosystem I P700 chlorophyll a apoprotein A2"/>
    <property type="match status" value="1"/>
</dbReference>
<dbReference type="Gene3D" id="1.20.1130.10">
    <property type="entry name" value="Photosystem I PsaA/PsaB"/>
    <property type="match status" value="1"/>
</dbReference>
<dbReference type="HAMAP" id="MF_00458">
    <property type="entry name" value="PSI_PsaA"/>
    <property type="match status" value="1"/>
</dbReference>
<dbReference type="InterPro" id="IPR006243">
    <property type="entry name" value="PSI_PsaA"/>
</dbReference>
<dbReference type="InterPro" id="IPR001280">
    <property type="entry name" value="PSI_PsaA/B"/>
</dbReference>
<dbReference type="InterPro" id="IPR020586">
    <property type="entry name" value="PSI_PsaA/B_CS"/>
</dbReference>
<dbReference type="InterPro" id="IPR036408">
    <property type="entry name" value="PSI_PsaA/B_sf"/>
</dbReference>
<dbReference type="NCBIfam" id="TIGR01335">
    <property type="entry name" value="psaA"/>
    <property type="match status" value="1"/>
</dbReference>
<dbReference type="PANTHER" id="PTHR30128">
    <property type="entry name" value="OUTER MEMBRANE PROTEIN, OMPA-RELATED"/>
    <property type="match status" value="1"/>
</dbReference>
<dbReference type="PANTHER" id="PTHR30128:SF19">
    <property type="entry name" value="PHOTOSYSTEM I P700 CHLOROPHYLL A APOPROTEIN A1-RELATED"/>
    <property type="match status" value="1"/>
</dbReference>
<dbReference type="Pfam" id="PF00223">
    <property type="entry name" value="PsaA_PsaB"/>
    <property type="match status" value="1"/>
</dbReference>
<dbReference type="PIRSF" id="PIRSF002905">
    <property type="entry name" value="PSI_A"/>
    <property type="match status" value="1"/>
</dbReference>
<dbReference type="PRINTS" id="PR00257">
    <property type="entry name" value="PHOTSYSPSAAB"/>
</dbReference>
<dbReference type="SUPFAM" id="SSF81558">
    <property type="entry name" value="Photosystem I subunits PsaA/PsaB"/>
    <property type="match status" value="1"/>
</dbReference>
<dbReference type="PROSITE" id="PS00419">
    <property type="entry name" value="PHOTOSYSTEM_I_PSAAB"/>
    <property type="match status" value="1"/>
</dbReference>
<reference key="1">
    <citation type="submission" date="2007-03" db="EMBL/GenBank/DDBJ databases">
        <title>Sequencing analysis of Aethionema coridifolium chloroplast DNA.</title>
        <authorList>
            <person name="Hosouchi T."/>
            <person name="Tsuruoka H."/>
            <person name="Kotani H."/>
        </authorList>
    </citation>
    <scope>NUCLEOTIDE SEQUENCE [LARGE SCALE GENOMIC DNA]</scope>
</reference>
<proteinExistence type="inferred from homology"/>
<gene>
    <name evidence="1" type="primary">psaA</name>
</gene>
<protein>
    <recommendedName>
        <fullName evidence="1">Photosystem I P700 chlorophyll a apoprotein A1</fullName>
        <ecNumber evidence="1">1.97.1.12</ecNumber>
    </recommendedName>
    <alternativeName>
        <fullName evidence="1">PSI-A</fullName>
    </alternativeName>
    <alternativeName>
        <fullName evidence="1">PsaA</fullName>
    </alternativeName>
</protein>
<feature type="chain" id="PRO_0000294214" description="Photosystem I P700 chlorophyll a apoprotein A1">
    <location>
        <begin position="1"/>
        <end position="750"/>
    </location>
</feature>
<feature type="transmembrane region" description="Helical; Name=I" evidence="1">
    <location>
        <begin position="70"/>
        <end position="93"/>
    </location>
</feature>
<feature type="transmembrane region" description="Helical; Name=II" evidence="1">
    <location>
        <begin position="156"/>
        <end position="179"/>
    </location>
</feature>
<feature type="transmembrane region" description="Helical; Name=III" evidence="1">
    <location>
        <begin position="195"/>
        <end position="219"/>
    </location>
</feature>
<feature type="transmembrane region" description="Helical; Name=IV" evidence="1">
    <location>
        <begin position="291"/>
        <end position="309"/>
    </location>
</feature>
<feature type="transmembrane region" description="Helical; Name=V" evidence="1">
    <location>
        <begin position="346"/>
        <end position="369"/>
    </location>
</feature>
<feature type="transmembrane region" description="Helical; Name=VI" evidence="1">
    <location>
        <begin position="385"/>
        <end position="411"/>
    </location>
</feature>
<feature type="transmembrane region" description="Helical; Name=VII" evidence="1">
    <location>
        <begin position="433"/>
        <end position="455"/>
    </location>
</feature>
<feature type="transmembrane region" description="Helical; Name=VIII" evidence="1">
    <location>
        <begin position="531"/>
        <end position="549"/>
    </location>
</feature>
<feature type="transmembrane region" description="Helical; Name=IX" evidence="1">
    <location>
        <begin position="589"/>
        <end position="610"/>
    </location>
</feature>
<feature type="transmembrane region" description="Helical; Name=X" evidence="1">
    <location>
        <begin position="664"/>
        <end position="686"/>
    </location>
</feature>
<feature type="transmembrane region" description="Helical; Name=XI" evidence="1">
    <location>
        <begin position="724"/>
        <end position="744"/>
    </location>
</feature>
<feature type="binding site" evidence="1">
    <location>
        <position position="573"/>
    </location>
    <ligand>
        <name>[4Fe-4S] cluster</name>
        <dbReference type="ChEBI" id="CHEBI:49883"/>
        <note>ligand shared between dimeric partners</note>
    </ligand>
</feature>
<feature type="binding site" evidence="1">
    <location>
        <position position="582"/>
    </location>
    <ligand>
        <name>[4Fe-4S] cluster</name>
        <dbReference type="ChEBI" id="CHEBI:49883"/>
        <note>ligand shared between dimeric partners</note>
    </ligand>
</feature>
<feature type="binding site" description="axial binding residue" evidence="1">
    <location>
        <position position="675"/>
    </location>
    <ligand>
        <name>chlorophyll a'</name>
        <dbReference type="ChEBI" id="CHEBI:189419"/>
        <label>A1</label>
    </ligand>
    <ligandPart>
        <name>Mg</name>
        <dbReference type="ChEBI" id="CHEBI:25107"/>
    </ligandPart>
</feature>
<feature type="binding site" description="axial binding residue" evidence="1">
    <location>
        <position position="683"/>
    </location>
    <ligand>
        <name>chlorophyll a</name>
        <dbReference type="ChEBI" id="CHEBI:58416"/>
        <label>A3</label>
    </ligand>
    <ligandPart>
        <name>Mg</name>
        <dbReference type="ChEBI" id="CHEBI:25107"/>
    </ligandPart>
</feature>
<feature type="binding site" evidence="1">
    <location>
        <position position="691"/>
    </location>
    <ligand>
        <name>chlorophyll a</name>
        <dbReference type="ChEBI" id="CHEBI:58416"/>
        <label>A3</label>
    </ligand>
</feature>
<feature type="binding site" evidence="1">
    <location>
        <position position="692"/>
    </location>
    <ligand>
        <name>phylloquinone</name>
        <dbReference type="ChEBI" id="CHEBI:18067"/>
        <label>A</label>
    </ligand>
</feature>
<evidence type="ECO:0000255" key="1">
    <source>
        <dbReference type="HAMAP-Rule" id="MF_00458"/>
    </source>
</evidence>
<name>PSAA_AETCO</name>
<accession>A4QJB5</accession>
<keyword id="KW-0004">4Fe-4S</keyword>
<keyword id="KW-0148">Chlorophyll</keyword>
<keyword id="KW-0150">Chloroplast</keyword>
<keyword id="KW-0157">Chromophore</keyword>
<keyword id="KW-0249">Electron transport</keyword>
<keyword id="KW-0408">Iron</keyword>
<keyword id="KW-0411">Iron-sulfur</keyword>
<keyword id="KW-0460">Magnesium</keyword>
<keyword id="KW-0472">Membrane</keyword>
<keyword id="KW-0479">Metal-binding</keyword>
<keyword id="KW-0560">Oxidoreductase</keyword>
<keyword id="KW-0602">Photosynthesis</keyword>
<keyword id="KW-0603">Photosystem I</keyword>
<keyword id="KW-0934">Plastid</keyword>
<keyword id="KW-0793">Thylakoid</keyword>
<keyword id="KW-0812">Transmembrane</keyword>
<keyword id="KW-1133">Transmembrane helix</keyword>
<keyword id="KW-0813">Transport</keyword>
<organism>
    <name type="scientific">Aethionema cordifolium</name>
    <name type="common">Lebanon stonecress</name>
    <dbReference type="NCBI Taxonomy" id="434059"/>
    <lineage>
        <taxon>Eukaryota</taxon>
        <taxon>Viridiplantae</taxon>
        <taxon>Streptophyta</taxon>
        <taxon>Embryophyta</taxon>
        <taxon>Tracheophyta</taxon>
        <taxon>Spermatophyta</taxon>
        <taxon>Magnoliopsida</taxon>
        <taxon>eudicotyledons</taxon>
        <taxon>Gunneridae</taxon>
        <taxon>Pentapetalae</taxon>
        <taxon>rosids</taxon>
        <taxon>malvids</taxon>
        <taxon>Brassicales</taxon>
        <taxon>Brassicaceae</taxon>
        <taxon>Aethionemeae</taxon>
        <taxon>Aethionema</taxon>
    </lineage>
</organism>